<comment type="function">
    <text evidence="1">Binds the lower part of the 30S subunit head. Binds mRNA in the 70S ribosome, positioning it for translation.</text>
</comment>
<comment type="subunit">
    <text evidence="1">Part of the 30S ribosomal subunit. Forms a tight complex with proteins S10 and S14.</text>
</comment>
<comment type="similarity">
    <text evidence="1">Belongs to the universal ribosomal protein uS3 family.</text>
</comment>
<gene>
    <name evidence="1" type="primary">rpsC</name>
    <name evidence="1" type="synonym">rps3</name>
    <name type="ordered locus">Syncc9902_1961</name>
</gene>
<protein>
    <recommendedName>
        <fullName evidence="1">Small ribosomal subunit protein uS3</fullName>
    </recommendedName>
    <alternativeName>
        <fullName evidence="3">30S ribosomal protein S3</fullName>
    </alternativeName>
</protein>
<sequence>MGHKIHPTGLRLGITQEHRSRWYASSKTYPSLLQEDDRIRKFIHKKYGSAGISDVLIARKADQLEVELKTARPGVLVGRQGSGIEDLRAGIQKTVGDKSRQVRINVVEVERVDGDAFLLAEYIAQQLEKRVAFRRTIRMAVQRAQRAGVLGLKIQVSGRLNGAEIARTEWTREGRVPLHTLRADIDYATKVGKTTYGVLGIKVWVFKGEVLNEQSQTMPVGANPRRRASRRPQQFEDRSNEG</sequence>
<name>RS3_SYNS9</name>
<organism>
    <name type="scientific">Synechococcus sp. (strain CC9902)</name>
    <dbReference type="NCBI Taxonomy" id="316279"/>
    <lineage>
        <taxon>Bacteria</taxon>
        <taxon>Bacillati</taxon>
        <taxon>Cyanobacteriota</taxon>
        <taxon>Cyanophyceae</taxon>
        <taxon>Synechococcales</taxon>
        <taxon>Synechococcaceae</taxon>
        <taxon>Synechococcus</taxon>
    </lineage>
</organism>
<reference key="1">
    <citation type="submission" date="2005-08" db="EMBL/GenBank/DDBJ databases">
        <title>Complete sequence of Synechococcus sp. CC9902.</title>
        <authorList>
            <person name="Copeland A."/>
            <person name="Lucas S."/>
            <person name="Lapidus A."/>
            <person name="Barry K."/>
            <person name="Detter J.C."/>
            <person name="Glavina T."/>
            <person name="Hammon N."/>
            <person name="Israni S."/>
            <person name="Pitluck S."/>
            <person name="Martinez M."/>
            <person name="Schmutz J."/>
            <person name="Larimer F."/>
            <person name="Land M."/>
            <person name="Kyrpides N."/>
            <person name="Ivanova N."/>
            <person name="Richardson P."/>
        </authorList>
    </citation>
    <scope>NUCLEOTIDE SEQUENCE [LARGE SCALE GENOMIC DNA]</scope>
    <source>
        <strain>CC9902</strain>
    </source>
</reference>
<feature type="chain" id="PRO_0000293905" description="Small ribosomal subunit protein uS3">
    <location>
        <begin position="1"/>
        <end position="242"/>
    </location>
</feature>
<feature type="domain" description="KH type-2" evidence="1">
    <location>
        <begin position="39"/>
        <end position="110"/>
    </location>
</feature>
<feature type="region of interest" description="Disordered" evidence="2">
    <location>
        <begin position="216"/>
        <end position="242"/>
    </location>
</feature>
<feature type="compositionally biased region" description="Basic and acidic residues" evidence="2">
    <location>
        <begin position="233"/>
        <end position="242"/>
    </location>
</feature>
<keyword id="KW-1185">Reference proteome</keyword>
<keyword id="KW-0687">Ribonucleoprotein</keyword>
<keyword id="KW-0689">Ribosomal protein</keyword>
<keyword id="KW-0694">RNA-binding</keyword>
<keyword id="KW-0699">rRNA-binding</keyword>
<evidence type="ECO:0000255" key="1">
    <source>
        <dbReference type="HAMAP-Rule" id="MF_01309"/>
    </source>
</evidence>
<evidence type="ECO:0000256" key="2">
    <source>
        <dbReference type="SAM" id="MobiDB-lite"/>
    </source>
</evidence>
<evidence type="ECO:0000305" key="3"/>
<proteinExistence type="inferred from homology"/>
<accession>Q3AUX0</accession>
<dbReference type="EMBL" id="CP000097">
    <property type="protein sequence ID" value="ABB26919.1"/>
    <property type="molecule type" value="Genomic_DNA"/>
</dbReference>
<dbReference type="RefSeq" id="WP_011360718.1">
    <property type="nucleotide sequence ID" value="NC_007513.1"/>
</dbReference>
<dbReference type="SMR" id="Q3AUX0"/>
<dbReference type="STRING" id="316279.Syncc9902_1961"/>
<dbReference type="KEGG" id="sye:Syncc9902_1961"/>
<dbReference type="eggNOG" id="COG0092">
    <property type="taxonomic scope" value="Bacteria"/>
</dbReference>
<dbReference type="HOGENOM" id="CLU_058591_0_2_3"/>
<dbReference type="OrthoDB" id="9806396at2"/>
<dbReference type="Proteomes" id="UP000002712">
    <property type="component" value="Chromosome"/>
</dbReference>
<dbReference type="GO" id="GO:0022627">
    <property type="term" value="C:cytosolic small ribosomal subunit"/>
    <property type="evidence" value="ECO:0007669"/>
    <property type="project" value="TreeGrafter"/>
</dbReference>
<dbReference type="GO" id="GO:0003729">
    <property type="term" value="F:mRNA binding"/>
    <property type="evidence" value="ECO:0007669"/>
    <property type="project" value="UniProtKB-UniRule"/>
</dbReference>
<dbReference type="GO" id="GO:0019843">
    <property type="term" value="F:rRNA binding"/>
    <property type="evidence" value="ECO:0007669"/>
    <property type="project" value="UniProtKB-UniRule"/>
</dbReference>
<dbReference type="GO" id="GO:0003735">
    <property type="term" value="F:structural constituent of ribosome"/>
    <property type="evidence" value="ECO:0007669"/>
    <property type="project" value="InterPro"/>
</dbReference>
<dbReference type="GO" id="GO:0006412">
    <property type="term" value="P:translation"/>
    <property type="evidence" value="ECO:0007669"/>
    <property type="project" value="UniProtKB-UniRule"/>
</dbReference>
<dbReference type="CDD" id="cd02412">
    <property type="entry name" value="KH-II_30S_S3"/>
    <property type="match status" value="1"/>
</dbReference>
<dbReference type="FunFam" id="3.30.300.20:FF:000001">
    <property type="entry name" value="30S ribosomal protein S3"/>
    <property type="match status" value="1"/>
</dbReference>
<dbReference type="Gene3D" id="3.30.300.20">
    <property type="match status" value="1"/>
</dbReference>
<dbReference type="Gene3D" id="3.30.1140.32">
    <property type="entry name" value="Ribosomal protein S3, C-terminal domain"/>
    <property type="match status" value="1"/>
</dbReference>
<dbReference type="HAMAP" id="MF_01309_B">
    <property type="entry name" value="Ribosomal_uS3_B"/>
    <property type="match status" value="1"/>
</dbReference>
<dbReference type="InterPro" id="IPR004087">
    <property type="entry name" value="KH_dom"/>
</dbReference>
<dbReference type="InterPro" id="IPR015946">
    <property type="entry name" value="KH_dom-like_a/b"/>
</dbReference>
<dbReference type="InterPro" id="IPR004044">
    <property type="entry name" value="KH_dom_type_2"/>
</dbReference>
<dbReference type="InterPro" id="IPR009019">
    <property type="entry name" value="KH_sf_prok-type"/>
</dbReference>
<dbReference type="InterPro" id="IPR036419">
    <property type="entry name" value="Ribosomal_S3_C_sf"/>
</dbReference>
<dbReference type="InterPro" id="IPR005704">
    <property type="entry name" value="Ribosomal_uS3_bac-typ"/>
</dbReference>
<dbReference type="InterPro" id="IPR001351">
    <property type="entry name" value="Ribosomal_uS3_C"/>
</dbReference>
<dbReference type="InterPro" id="IPR018280">
    <property type="entry name" value="Ribosomal_uS3_CS"/>
</dbReference>
<dbReference type="NCBIfam" id="TIGR01009">
    <property type="entry name" value="rpsC_bact"/>
    <property type="match status" value="1"/>
</dbReference>
<dbReference type="PANTHER" id="PTHR11760">
    <property type="entry name" value="30S/40S RIBOSOMAL PROTEIN S3"/>
    <property type="match status" value="1"/>
</dbReference>
<dbReference type="PANTHER" id="PTHR11760:SF19">
    <property type="entry name" value="SMALL RIBOSOMAL SUBUNIT PROTEIN US3C"/>
    <property type="match status" value="1"/>
</dbReference>
<dbReference type="Pfam" id="PF07650">
    <property type="entry name" value="KH_2"/>
    <property type="match status" value="1"/>
</dbReference>
<dbReference type="Pfam" id="PF00189">
    <property type="entry name" value="Ribosomal_S3_C"/>
    <property type="match status" value="1"/>
</dbReference>
<dbReference type="SMART" id="SM00322">
    <property type="entry name" value="KH"/>
    <property type="match status" value="1"/>
</dbReference>
<dbReference type="SUPFAM" id="SSF54814">
    <property type="entry name" value="Prokaryotic type KH domain (KH-domain type II)"/>
    <property type="match status" value="1"/>
</dbReference>
<dbReference type="SUPFAM" id="SSF54821">
    <property type="entry name" value="Ribosomal protein S3 C-terminal domain"/>
    <property type="match status" value="1"/>
</dbReference>
<dbReference type="PROSITE" id="PS50823">
    <property type="entry name" value="KH_TYPE_2"/>
    <property type="match status" value="1"/>
</dbReference>
<dbReference type="PROSITE" id="PS00548">
    <property type="entry name" value="RIBOSOMAL_S3"/>
    <property type="match status" value="1"/>
</dbReference>